<protein>
    <recommendedName>
        <fullName evidence="1">Peptide methionine sulfoxide reductase MsrB</fullName>
        <ecNumber evidence="1">1.8.4.12</ecNumber>
    </recommendedName>
    <alternativeName>
        <fullName evidence="1">Peptide-methionine (R)-S-oxide reductase</fullName>
    </alternativeName>
</protein>
<reference key="1">
    <citation type="journal article" date="2011" name="J. Bacteriol.">
        <title>Comparative genomics of 28 Salmonella enterica isolates: evidence for CRISPR-mediated adaptive sublineage evolution.</title>
        <authorList>
            <person name="Fricke W.F."/>
            <person name="Mammel M.K."/>
            <person name="McDermott P.F."/>
            <person name="Tartera C."/>
            <person name="White D.G."/>
            <person name="Leclerc J.E."/>
            <person name="Ravel J."/>
            <person name="Cebula T.A."/>
        </authorList>
    </citation>
    <scope>NUCLEOTIDE SEQUENCE [LARGE SCALE GENOMIC DNA]</scope>
    <source>
        <strain>SL476</strain>
    </source>
</reference>
<name>MSRB_SALHS</name>
<gene>
    <name evidence="1" type="primary">msrB</name>
    <name type="ordered locus">SeHA_C1418</name>
</gene>
<dbReference type="EC" id="1.8.4.12" evidence="1"/>
<dbReference type="EMBL" id="CP001120">
    <property type="protein sequence ID" value="ACF70238.1"/>
    <property type="molecule type" value="Genomic_DNA"/>
</dbReference>
<dbReference type="RefSeq" id="WP_001519539.1">
    <property type="nucleotide sequence ID" value="NC_011083.1"/>
</dbReference>
<dbReference type="SMR" id="B4TGC8"/>
<dbReference type="KEGG" id="seh:SeHA_C1418"/>
<dbReference type="HOGENOM" id="CLU_031040_8_5_6"/>
<dbReference type="Proteomes" id="UP000001866">
    <property type="component" value="Chromosome"/>
</dbReference>
<dbReference type="GO" id="GO:0005737">
    <property type="term" value="C:cytoplasm"/>
    <property type="evidence" value="ECO:0007669"/>
    <property type="project" value="TreeGrafter"/>
</dbReference>
<dbReference type="GO" id="GO:0033743">
    <property type="term" value="F:peptide-methionine (R)-S-oxide reductase activity"/>
    <property type="evidence" value="ECO:0007669"/>
    <property type="project" value="UniProtKB-UniRule"/>
</dbReference>
<dbReference type="GO" id="GO:0008270">
    <property type="term" value="F:zinc ion binding"/>
    <property type="evidence" value="ECO:0007669"/>
    <property type="project" value="UniProtKB-UniRule"/>
</dbReference>
<dbReference type="GO" id="GO:0030091">
    <property type="term" value="P:protein repair"/>
    <property type="evidence" value="ECO:0007669"/>
    <property type="project" value="InterPro"/>
</dbReference>
<dbReference type="GO" id="GO:0006979">
    <property type="term" value="P:response to oxidative stress"/>
    <property type="evidence" value="ECO:0007669"/>
    <property type="project" value="InterPro"/>
</dbReference>
<dbReference type="FunFam" id="2.170.150.20:FF:000001">
    <property type="entry name" value="Peptide methionine sulfoxide reductase MsrB"/>
    <property type="match status" value="1"/>
</dbReference>
<dbReference type="Gene3D" id="2.170.150.20">
    <property type="entry name" value="Peptide methionine sulfoxide reductase"/>
    <property type="match status" value="1"/>
</dbReference>
<dbReference type="HAMAP" id="MF_01400">
    <property type="entry name" value="MsrB"/>
    <property type="match status" value="1"/>
</dbReference>
<dbReference type="InterPro" id="IPR028427">
    <property type="entry name" value="Met_Sox_Rdtase_MsrB"/>
</dbReference>
<dbReference type="InterPro" id="IPR002579">
    <property type="entry name" value="Met_Sox_Rdtase_MsrB_dom"/>
</dbReference>
<dbReference type="InterPro" id="IPR011057">
    <property type="entry name" value="Mss4-like_sf"/>
</dbReference>
<dbReference type="NCBIfam" id="TIGR00357">
    <property type="entry name" value="peptide-methionine (R)-S-oxide reductase MsrB"/>
    <property type="match status" value="1"/>
</dbReference>
<dbReference type="PANTHER" id="PTHR10173">
    <property type="entry name" value="METHIONINE SULFOXIDE REDUCTASE"/>
    <property type="match status" value="1"/>
</dbReference>
<dbReference type="PANTHER" id="PTHR10173:SF52">
    <property type="entry name" value="METHIONINE-R-SULFOXIDE REDUCTASE B1"/>
    <property type="match status" value="1"/>
</dbReference>
<dbReference type="Pfam" id="PF01641">
    <property type="entry name" value="SelR"/>
    <property type="match status" value="1"/>
</dbReference>
<dbReference type="SUPFAM" id="SSF51316">
    <property type="entry name" value="Mss4-like"/>
    <property type="match status" value="1"/>
</dbReference>
<dbReference type="PROSITE" id="PS51790">
    <property type="entry name" value="MSRB"/>
    <property type="match status" value="1"/>
</dbReference>
<feature type="chain" id="PRO_1000145381" description="Peptide methionine sulfoxide reductase MsrB">
    <location>
        <begin position="1"/>
        <end position="137"/>
    </location>
</feature>
<feature type="domain" description="MsrB" evidence="2">
    <location>
        <begin position="7"/>
        <end position="129"/>
    </location>
</feature>
<feature type="active site" description="Nucleophile" evidence="2">
    <location>
        <position position="118"/>
    </location>
</feature>
<feature type="binding site" evidence="2">
    <location>
        <position position="46"/>
    </location>
    <ligand>
        <name>Zn(2+)</name>
        <dbReference type="ChEBI" id="CHEBI:29105"/>
    </ligand>
</feature>
<feature type="binding site" evidence="2">
    <location>
        <position position="49"/>
    </location>
    <ligand>
        <name>Zn(2+)</name>
        <dbReference type="ChEBI" id="CHEBI:29105"/>
    </ligand>
</feature>
<feature type="binding site" evidence="2">
    <location>
        <position position="95"/>
    </location>
    <ligand>
        <name>Zn(2+)</name>
        <dbReference type="ChEBI" id="CHEBI:29105"/>
    </ligand>
</feature>
<feature type="binding site" evidence="2">
    <location>
        <position position="98"/>
    </location>
    <ligand>
        <name>Zn(2+)</name>
        <dbReference type="ChEBI" id="CHEBI:29105"/>
    </ligand>
</feature>
<organism>
    <name type="scientific">Salmonella heidelberg (strain SL476)</name>
    <dbReference type="NCBI Taxonomy" id="454169"/>
    <lineage>
        <taxon>Bacteria</taxon>
        <taxon>Pseudomonadati</taxon>
        <taxon>Pseudomonadota</taxon>
        <taxon>Gammaproteobacteria</taxon>
        <taxon>Enterobacterales</taxon>
        <taxon>Enterobacteriaceae</taxon>
        <taxon>Salmonella</taxon>
    </lineage>
</organism>
<proteinExistence type="inferred from homology"/>
<sequence length="137" mass="15471">MANQPSAEELKKKLSEMQFYVTQDRGTEPPFTGRLLHNKRDGVYHCLVCDTPLFHSHTKYDSGCGWPSFYQPVSEEAIRYIDDFSHGMQRVEIRCGNCDAHLGHVFPDGPQPTGERYCVNSASLAFSDEKNGDQLKG</sequence>
<keyword id="KW-0479">Metal-binding</keyword>
<keyword id="KW-0560">Oxidoreductase</keyword>
<keyword id="KW-0862">Zinc</keyword>
<accession>B4TGC8</accession>
<comment type="catalytic activity">
    <reaction evidence="1">
        <text>L-methionyl-[protein] + [thioredoxin]-disulfide + H2O = L-methionyl-(R)-S-oxide-[protein] + [thioredoxin]-dithiol</text>
        <dbReference type="Rhea" id="RHEA:24164"/>
        <dbReference type="Rhea" id="RHEA-COMP:10698"/>
        <dbReference type="Rhea" id="RHEA-COMP:10700"/>
        <dbReference type="Rhea" id="RHEA-COMP:12313"/>
        <dbReference type="Rhea" id="RHEA-COMP:12314"/>
        <dbReference type="ChEBI" id="CHEBI:15377"/>
        <dbReference type="ChEBI" id="CHEBI:16044"/>
        <dbReference type="ChEBI" id="CHEBI:29950"/>
        <dbReference type="ChEBI" id="CHEBI:45764"/>
        <dbReference type="ChEBI" id="CHEBI:50058"/>
        <dbReference type="EC" id="1.8.4.12"/>
    </reaction>
</comment>
<comment type="cofactor">
    <cofactor evidence="1">
        <name>Zn(2+)</name>
        <dbReference type="ChEBI" id="CHEBI:29105"/>
    </cofactor>
    <text evidence="1">Binds 1 zinc ion per subunit. The zinc ion is important for the structural integrity of the protein.</text>
</comment>
<comment type="similarity">
    <text evidence="1">Belongs to the MsrB Met sulfoxide reductase family.</text>
</comment>
<evidence type="ECO:0000255" key="1">
    <source>
        <dbReference type="HAMAP-Rule" id="MF_01400"/>
    </source>
</evidence>
<evidence type="ECO:0000255" key="2">
    <source>
        <dbReference type="PROSITE-ProRule" id="PRU01126"/>
    </source>
</evidence>